<reference key="1">
    <citation type="submission" date="2007-10" db="EMBL/GenBank/DDBJ databases">
        <title>Complete sequence of Methanococcus maripaludis C6.</title>
        <authorList>
            <consortium name="US DOE Joint Genome Institute"/>
            <person name="Copeland A."/>
            <person name="Lucas S."/>
            <person name="Lapidus A."/>
            <person name="Barry K."/>
            <person name="Glavina del Rio T."/>
            <person name="Dalin E."/>
            <person name="Tice H."/>
            <person name="Pitluck S."/>
            <person name="Clum A."/>
            <person name="Schmutz J."/>
            <person name="Larimer F."/>
            <person name="Land M."/>
            <person name="Hauser L."/>
            <person name="Kyrpides N."/>
            <person name="Mikhailova N."/>
            <person name="Sieprawska-Lupa M."/>
            <person name="Whitman W.B."/>
            <person name="Richardson P."/>
        </authorList>
    </citation>
    <scope>NUCLEOTIDE SEQUENCE [LARGE SCALE GENOMIC DNA]</scope>
    <source>
        <strain>C6 / ATCC BAA-1332</strain>
    </source>
</reference>
<organism>
    <name type="scientific">Methanococcus maripaludis (strain C6 / ATCC BAA-1332)</name>
    <dbReference type="NCBI Taxonomy" id="444158"/>
    <lineage>
        <taxon>Archaea</taxon>
        <taxon>Methanobacteriati</taxon>
        <taxon>Methanobacteriota</taxon>
        <taxon>Methanomada group</taxon>
        <taxon>Methanococci</taxon>
        <taxon>Methanococcales</taxon>
        <taxon>Methanococcaceae</taxon>
        <taxon>Methanococcus</taxon>
    </lineage>
</organism>
<evidence type="ECO:0000255" key="1">
    <source>
        <dbReference type="HAMAP-Rule" id="MF_02075"/>
    </source>
</evidence>
<proteinExistence type="inferred from homology"/>
<sequence length="438" mass="50249">MYLIADWRRTHYSEEVIPEMDGQEVILMGWVHSIRALGKLAFVILRDREGTIQAVVPKQKVDEETFEIAKKLGKEDIIAIRGKVVANEKAPKGFEVIPIEIRVLNKADAPLPLDPSEKVPAEIDTRLDKRFLDIRRPKIQAIFKIRSEMLRSIRKTFADEGFIEVNTPKLVASATEGGTELFPISYFEKEAFLGQSPQLYKQMMMAGGFDKVFEIAQIFRAEEHNTRRHLNEAVSIDTEMSFVNEKDAMAMLEKVVYNCYADIEYNRPQEIELLELNWEVPEKTFDKVTYTEAIDIAISKGVEIEWGEDLSRAAERAVGDEMGGLYFITEWPTQTRPFYTLPHEKDAKVCKAFDLMYKELEISSGAQRVHKYDLLVENISNMGMNPDSFETYLEAFKFGMPPHAGWGLGADRFAMVLTAQDNIRECVLFPRDRQRLTP</sequence>
<protein>
    <recommendedName>
        <fullName evidence="1">Aspartate--tRNA(Asp/Asn) ligase</fullName>
        <ecNumber evidence="1">6.1.1.23</ecNumber>
    </recommendedName>
    <alternativeName>
        <fullName evidence="1">Aspartyl-tRNA synthetase</fullName>
        <shortName evidence="1">AspRS</shortName>
    </alternativeName>
    <alternativeName>
        <fullName evidence="1">Non-discriminating aspartyl-tRNA synthetase</fullName>
        <shortName evidence="1">ND-AspRS</shortName>
    </alternativeName>
</protein>
<gene>
    <name evidence="1" type="primary">aspS</name>
    <name type="ordered locus">MmarC6_1053</name>
</gene>
<feature type="chain" id="PRO_1000091013" description="Aspartate--tRNA(Asp/Asn) ligase">
    <location>
        <begin position="1"/>
        <end position="438"/>
    </location>
</feature>
<feature type="region of interest" description="Aspartate" evidence="1">
    <location>
        <begin position="198"/>
        <end position="201"/>
    </location>
</feature>
<feature type="binding site" evidence="1">
    <location>
        <position position="176"/>
    </location>
    <ligand>
        <name>L-aspartate</name>
        <dbReference type="ChEBI" id="CHEBI:29991"/>
    </ligand>
</feature>
<feature type="binding site" evidence="1">
    <location>
        <begin position="220"/>
        <end position="222"/>
    </location>
    <ligand>
        <name>ATP</name>
        <dbReference type="ChEBI" id="CHEBI:30616"/>
    </ligand>
</feature>
<feature type="binding site" evidence="1">
    <location>
        <position position="220"/>
    </location>
    <ligand>
        <name>L-aspartate</name>
        <dbReference type="ChEBI" id="CHEBI:29991"/>
    </ligand>
</feature>
<feature type="binding site" evidence="1">
    <location>
        <begin position="228"/>
        <end position="230"/>
    </location>
    <ligand>
        <name>ATP</name>
        <dbReference type="ChEBI" id="CHEBI:30616"/>
    </ligand>
</feature>
<feature type="binding site" evidence="1">
    <location>
        <position position="361"/>
    </location>
    <ligand>
        <name>ATP</name>
        <dbReference type="ChEBI" id="CHEBI:30616"/>
    </ligand>
</feature>
<feature type="binding site" evidence="1">
    <location>
        <position position="361"/>
    </location>
    <ligand>
        <name>Mg(2+)</name>
        <dbReference type="ChEBI" id="CHEBI:18420"/>
        <label>2</label>
    </ligand>
</feature>
<feature type="binding site" evidence="1">
    <location>
        <position position="361"/>
    </location>
    <ligand>
        <name>Mg(2+)</name>
        <dbReference type="ChEBI" id="CHEBI:18420"/>
        <label>3</label>
    </ligand>
</feature>
<feature type="binding site" evidence="1">
    <location>
        <position position="364"/>
    </location>
    <ligand>
        <name>L-aspartate</name>
        <dbReference type="ChEBI" id="CHEBI:29991"/>
    </ligand>
</feature>
<feature type="binding site" evidence="1">
    <location>
        <position position="364"/>
    </location>
    <ligand>
        <name>Mg(2+)</name>
        <dbReference type="ChEBI" id="CHEBI:18420"/>
        <label>2</label>
    </ligand>
</feature>
<feature type="binding site" evidence="1">
    <location>
        <position position="368"/>
    </location>
    <ligand>
        <name>L-aspartate</name>
        <dbReference type="ChEBI" id="CHEBI:29991"/>
    </ligand>
</feature>
<feature type="binding site" evidence="1">
    <location>
        <begin position="409"/>
        <end position="412"/>
    </location>
    <ligand>
        <name>ATP</name>
        <dbReference type="ChEBI" id="CHEBI:30616"/>
    </ligand>
</feature>
<feature type="site" description="Important for tRNA non-discrimination" evidence="1">
    <location>
        <position position="91"/>
    </location>
</feature>
<comment type="function">
    <text evidence="1">Aspartyl-tRNA synthetase with relaxed tRNA specificity since it is able to aspartylate not only its cognate tRNA(Asp) but also tRNA(Asn). Reaction proceeds in two steps: L-aspartate is first activated by ATP to form Asp-AMP and then transferred to the acceptor end of tRNA(Asp/Asn).</text>
</comment>
<comment type="catalytic activity">
    <reaction evidence="1">
        <text>tRNA(Asx) + L-aspartate + ATP = L-aspartyl-tRNA(Asx) + AMP + diphosphate</text>
        <dbReference type="Rhea" id="RHEA:18349"/>
        <dbReference type="Rhea" id="RHEA-COMP:9710"/>
        <dbReference type="Rhea" id="RHEA-COMP:9711"/>
        <dbReference type="ChEBI" id="CHEBI:29991"/>
        <dbReference type="ChEBI" id="CHEBI:30616"/>
        <dbReference type="ChEBI" id="CHEBI:33019"/>
        <dbReference type="ChEBI" id="CHEBI:78442"/>
        <dbReference type="ChEBI" id="CHEBI:78516"/>
        <dbReference type="ChEBI" id="CHEBI:456215"/>
        <dbReference type="EC" id="6.1.1.23"/>
    </reaction>
</comment>
<comment type="cofactor">
    <cofactor evidence="1">
        <name>Mg(2+)</name>
        <dbReference type="ChEBI" id="CHEBI:18420"/>
    </cofactor>
    <text evidence="1">Binds 3 Mg(2+) cations per subunit. The strongest magnesium site (Mg1) is bound to the beta- and gamma-phosphates of ATP and four water molecules complete its coordination sphere.</text>
</comment>
<comment type="subunit">
    <text evidence="1">Homodimer.</text>
</comment>
<comment type="subcellular location">
    <subcellularLocation>
        <location evidence="1">Cytoplasm</location>
    </subcellularLocation>
</comment>
<comment type="similarity">
    <text evidence="1">Belongs to the class-II aminoacyl-tRNA synthetase family. Type 2 subfamily.</text>
</comment>
<accession>A9A945</accession>
<dbReference type="EC" id="6.1.1.23" evidence="1"/>
<dbReference type="EMBL" id="CP000867">
    <property type="protein sequence ID" value="ABX01868.1"/>
    <property type="molecule type" value="Genomic_DNA"/>
</dbReference>
<dbReference type="SMR" id="A9A945"/>
<dbReference type="STRING" id="444158.MmarC6_1053"/>
<dbReference type="KEGG" id="mmx:MmarC6_1053"/>
<dbReference type="eggNOG" id="arCOG00406">
    <property type="taxonomic scope" value="Archaea"/>
</dbReference>
<dbReference type="HOGENOM" id="CLU_004553_2_1_2"/>
<dbReference type="OrthoDB" id="5908at2157"/>
<dbReference type="PhylomeDB" id="A9A945"/>
<dbReference type="GO" id="GO:0017101">
    <property type="term" value="C:aminoacyl-tRNA synthetase multienzyme complex"/>
    <property type="evidence" value="ECO:0007669"/>
    <property type="project" value="TreeGrafter"/>
</dbReference>
<dbReference type="GO" id="GO:0005829">
    <property type="term" value="C:cytosol"/>
    <property type="evidence" value="ECO:0007669"/>
    <property type="project" value="TreeGrafter"/>
</dbReference>
<dbReference type="GO" id="GO:0004815">
    <property type="term" value="F:aspartate-tRNA ligase activity"/>
    <property type="evidence" value="ECO:0007669"/>
    <property type="project" value="UniProtKB-UniRule"/>
</dbReference>
<dbReference type="GO" id="GO:0050560">
    <property type="term" value="F:aspartate-tRNA(Asn) ligase activity"/>
    <property type="evidence" value="ECO:0007669"/>
    <property type="project" value="UniProtKB-EC"/>
</dbReference>
<dbReference type="GO" id="GO:0005524">
    <property type="term" value="F:ATP binding"/>
    <property type="evidence" value="ECO:0007669"/>
    <property type="project" value="UniProtKB-UniRule"/>
</dbReference>
<dbReference type="GO" id="GO:0000287">
    <property type="term" value="F:magnesium ion binding"/>
    <property type="evidence" value="ECO:0007669"/>
    <property type="project" value="UniProtKB-UniRule"/>
</dbReference>
<dbReference type="GO" id="GO:0003723">
    <property type="term" value="F:RNA binding"/>
    <property type="evidence" value="ECO:0007669"/>
    <property type="project" value="TreeGrafter"/>
</dbReference>
<dbReference type="GO" id="GO:0006422">
    <property type="term" value="P:aspartyl-tRNA aminoacylation"/>
    <property type="evidence" value="ECO:0007669"/>
    <property type="project" value="UniProtKB-UniRule"/>
</dbReference>
<dbReference type="CDD" id="cd00776">
    <property type="entry name" value="AsxRS_core"/>
    <property type="match status" value="1"/>
</dbReference>
<dbReference type="CDD" id="cd04316">
    <property type="entry name" value="ND_PkAspRS_like_N"/>
    <property type="match status" value="1"/>
</dbReference>
<dbReference type="FunFam" id="3.30.930.10:FF:000038">
    <property type="entry name" value="Aspartate--tRNA ligase"/>
    <property type="match status" value="1"/>
</dbReference>
<dbReference type="FunFam" id="2.40.50.140:FF:000324">
    <property type="entry name" value="Aspartate--tRNA(Asp/Asn) ligase"/>
    <property type="match status" value="1"/>
</dbReference>
<dbReference type="Gene3D" id="3.30.930.10">
    <property type="entry name" value="Bira Bifunctional Protein, Domain 2"/>
    <property type="match status" value="1"/>
</dbReference>
<dbReference type="Gene3D" id="2.40.50.140">
    <property type="entry name" value="Nucleic acid-binding proteins"/>
    <property type="match status" value="1"/>
</dbReference>
<dbReference type="HAMAP" id="MF_02075">
    <property type="entry name" value="Asp_tRNA_synth_type2"/>
    <property type="match status" value="1"/>
</dbReference>
<dbReference type="InterPro" id="IPR004364">
    <property type="entry name" value="Aa-tRNA-synt_II"/>
</dbReference>
<dbReference type="InterPro" id="IPR006195">
    <property type="entry name" value="aa-tRNA-synth_II"/>
</dbReference>
<dbReference type="InterPro" id="IPR045864">
    <property type="entry name" value="aa-tRNA-synth_II/BPL/LPL"/>
</dbReference>
<dbReference type="InterPro" id="IPR004523">
    <property type="entry name" value="Asp-tRNA_synthase_2"/>
</dbReference>
<dbReference type="InterPro" id="IPR002312">
    <property type="entry name" value="Asp/Asn-tRNA-synth_IIb"/>
</dbReference>
<dbReference type="InterPro" id="IPR012340">
    <property type="entry name" value="NA-bd_OB-fold"/>
</dbReference>
<dbReference type="InterPro" id="IPR004365">
    <property type="entry name" value="NA-bd_OB_tRNA"/>
</dbReference>
<dbReference type="NCBIfam" id="TIGR00458">
    <property type="entry name" value="aspS_nondisc"/>
    <property type="match status" value="1"/>
</dbReference>
<dbReference type="NCBIfam" id="NF003483">
    <property type="entry name" value="PRK05159.1"/>
    <property type="match status" value="1"/>
</dbReference>
<dbReference type="PANTHER" id="PTHR43450:SF1">
    <property type="entry name" value="ASPARTATE--TRNA LIGASE, CYTOPLASMIC"/>
    <property type="match status" value="1"/>
</dbReference>
<dbReference type="PANTHER" id="PTHR43450">
    <property type="entry name" value="ASPARTYL-TRNA SYNTHETASE"/>
    <property type="match status" value="1"/>
</dbReference>
<dbReference type="Pfam" id="PF00152">
    <property type="entry name" value="tRNA-synt_2"/>
    <property type="match status" value="1"/>
</dbReference>
<dbReference type="Pfam" id="PF01336">
    <property type="entry name" value="tRNA_anti-codon"/>
    <property type="match status" value="1"/>
</dbReference>
<dbReference type="PRINTS" id="PR01042">
    <property type="entry name" value="TRNASYNTHASP"/>
</dbReference>
<dbReference type="SUPFAM" id="SSF55681">
    <property type="entry name" value="Class II aaRS and biotin synthetases"/>
    <property type="match status" value="1"/>
</dbReference>
<dbReference type="SUPFAM" id="SSF50249">
    <property type="entry name" value="Nucleic acid-binding proteins"/>
    <property type="match status" value="1"/>
</dbReference>
<dbReference type="PROSITE" id="PS50862">
    <property type="entry name" value="AA_TRNA_LIGASE_II"/>
    <property type="match status" value="1"/>
</dbReference>
<name>SYDND_METM6</name>
<keyword id="KW-0030">Aminoacyl-tRNA synthetase</keyword>
<keyword id="KW-0067">ATP-binding</keyword>
<keyword id="KW-0963">Cytoplasm</keyword>
<keyword id="KW-0436">Ligase</keyword>
<keyword id="KW-0460">Magnesium</keyword>
<keyword id="KW-0479">Metal-binding</keyword>
<keyword id="KW-0547">Nucleotide-binding</keyword>
<keyword id="KW-0648">Protein biosynthesis</keyword>